<proteinExistence type="inferred from homology"/>
<reference key="1">
    <citation type="journal article" date="2008" name="DNA Res.">
        <title>Comparative genome analysis of Lactobacillus reuteri and Lactobacillus fermentum reveal a genomic island for reuterin and cobalamin production.</title>
        <authorList>
            <person name="Morita H."/>
            <person name="Toh H."/>
            <person name="Fukuda S."/>
            <person name="Horikawa H."/>
            <person name="Oshima K."/>
            <person name="Suzuki T."/>
            <person name="Murakami M."/>
            <person name="Hisamatsu S."/>
            <person name="Kato Y."/>
            <person name="Takizawa T."/>
            <person name="Fukuoka H."/>
            <person name="Yoshimura T."/>
            <person name="Itoh K."/>
            <person name="O'Sullivan D.J."/>
            <person name="McKay L.L."/>
            <person name="Ohno H."/>
            <person name="Kikuchi J."/>
            <person name="Masaoka T."/>
            <person name="Hattori M."/>
        </authorList>
    </citation>
    <scope>NUCLEOTIDE SEQUENCE [LARGE SCALE GENOMIC DNA]</scope>
    <source>
        <strain>JCM 1112</strain>
    </source>
</reference>
<gene>
    <name evidence="1" type="primary">rpsN</name>
    <name type="ordered locus">LAR_1024</name>
</gene>
<name>RS14_LIMRJ</name>
<evidence type="ECO:0000255" key="1">
    <source>
        <dbReference type="HAMAP-Rule" id="MF_00537"/>
    </source>
</evidence>
<evidence type="ECO:0000305" key="2"/>
<feature type="chain" id="PRO_1000128431" description="Small ribosomal subunit protein uS14A">
    <location>
        <begin position="1"/>
        <end position="89"/>
    </location>
</feature>
<comment type="function">
    <text evidence="1">Binds 16S rRNA, required for the assembly of 30S particles and may also be responsible for determining the conformation of the 16S rRNA at the A site.</text>
</comment>
<comment type="subunit">
    <text evidence="1">Part of the 30S ribosomal subunit. Contacts proteins S3 and S10.</text>
</comment>
<comment type="similarity">
    <text evidence="1">Belongs to the universal ribosomal protein uS14 family.</text>
</comment>
<keyword id="KW-0687">Ribonucleoprotein</keyword>
<keyword id="KW-0689">Ribosomal protein</keyword>
<keyword id="KW-0694">RNA-binding</keyword>
<keyword id="KW-0699">rRNA-binding</keyword>
<organism>
    <name type="scientific">Limosilactobacillus reuteri subsp. reuteri (strain JCM 1112)</name>
    <name type="common">Lactobacillus reuteri</name>
    <dbReference type="NCBI Taxonomy" id="557433"/>
    <lineage>
        <taxon>Bacteria</taxon>
        <taxon>Bacillati</taxon>
        <taxon>Bacillota</taxon>
        <taxon>Bacilli</taxon>
        <taxon>Lactobacillales</taxon>
        <taxon>Lactobacillaceae</taxon>
        <taxon>Limosilactobacillus</taxon>
    </lineage>
</organism>
<protein>
    <recommendedName>
        <fullName evidence="1">Small ribosomal subunit protein uS14A</fullName>
    </recommendedName>
    <alternativeName>
        <fullName evidence="2">30S ribosomal protein S14</fullName>
    </alternativeName>
</protein>
<sequence length="89" mass="10399">MAKKSKIAKLHHQEALVKKYAEKRKELKAKGDYIGLSKLPRNSSAVRLHNRDRYDGRPHAYMRKFGMSRIKFRELAHKGQIPGVRKASW</sequence>
<accession>B2G7V8</accession>
<dbReference type="EMBL" id="AP007281">
    <property type="protein sequence ID" value="BAG25540.1"/>
    <property type="molecule type" value="Genomic_DNA"/>
</dbReference>
<dbReference type="RefSeq" id="WP_003667006.1">
    <property type="nucleotide sequence ID" value="NC_010609.1"/>
</dbReference>
<dbReference type="SMR" id="B2G7V8"/>
<dbReference type="GeneID" id="77191802"/>
<dbReference type="KEGG" id="lrf:LAR_1024"/>
<dbReference type="HOGENOM" id="CLU_139869_0_0_9"/>
<dbReference type="GO" id="GO:0005737">
    <property type="term" value="C:cytoplasm"/>
    <property type="evidence" value="ECO:0007669"/>
    <property type="project" value="UniProtKB-ARBA"/>
</dbReference>
<dbReference type="GO" id="GO:0015935">
    <property type="term" value="C:small ribosomal subunit"/>
    <property type="evidence" value="ECO:0007669"/>
    <property type="project" value="TreeGrafter"/>
</dbReference>
<dbReference type="GO" id="GO:0019843">
    <property type="term" value="F:rRNA binding"/>
    <property type="evidence" value="ECO:0007669"/>
    <property type="project" value="UniProtKB-UniRule"/>
</dbReference>
<dbReference type="GO" id="GO:0003735">
    <property type="term" value="F:structural constituent of ribosome"/>
    <property type="evidence" value="ECO:0007669"/>
    <property type="project" value="InterPro"/>
</dbReference>
<dbReference type="GO" id="GO:0006412">
    <property type="term" value="P:translation"/>
    <property type="evidence" value="ECO:0007669"/>
    <property type="project" value="UniProtKB-UniRule"/>
</dbReference>
<dbReference type="Gene3D" id="4.10.830.10">
    <property type="entry name" value="30s Ribosomal Protein S14, Chain N"/>
    <property type="match status" value="1"/>
</dbReference>
<dbReference type="HAMAP" id="MF_00537">
    <property type="entry name" value="Ribosomal_uS14_1"/>
    <property type="match status" value="1"/>
</dbReference>
<dbReference type="InterPro" id="IPR001209">
    <property type="entry name" value="Ribosomal_uS14"/>
</dbReference>
<dbReference type="InterPro" id="IPR023036">
    <property type="entry name" value="Ribosomal_uS14_bac/plastid"/>
</dbReference>
<dbReference type="InterPro" id="IPR043140">
    <property type="entry name" value="Ribosomal_uS14_sf"/>
</dbReference>
<dbReference type="NCBIfam" id="NF006477">
    <property type="entry name" value="PRK08881.1"/>
    <property type="match status" value="1"/>
</dbReference>
<dbReference type="PANTHER" id="PTHR19836">
    <property type="entry name" value="30S RIBOSOMAL PROTEIN S14"/>
    <property type="match status" value="1"/>
</dbReference>
<dbReference type="PANTHER" id="PTHR19836:SF19">
    <property type="entry name" value="SMALL RIBOSOMAL SUBUNIT PROTEIN US14M"/>
    <property type="match status" value="1"/>
</dbReference>
<dbReference type="Pfam" id="PF00253">
    <property type="entry name" value="Ribosomal_S14"/>
    <property type="match status" value="1"/>
</dbReference>
<dbReference type="SUPFAM" id="SSF57716">
    <property type="entry name" value="Glucocorticoid receptor-like (DNA-binding domain)"/>
    <property type="match status" value="1"/>
</dbReference>